<protein>
    <recommendedName>
        <fullName>Adhesin MafA 2</fullName>
    </recommendedName>
</protein>
<keyword id="KW-0130">Cell adhesion</keyword>
<keyword id="KW-0998">Cell outer membrane</keyword>
<keyword id="KW-0449">Lipoprotein</keyword>
<keyword id="KW-0472">Membrane</keyword>
<keyword id="KW-0564">Palmitate</keyword>
<keyword id="KW-0732">Signal</keyword>
<keyword id="KW-0843">Virulence</keyword>
<evidence type="ECO:0000255" key="1">
    <source>
        <dbReference type="PROSITE-ProRule" id="PRU00303"/>
    </source>
</evidence>
<evidence type="ECO:0000256" key="2">
    <source>
        <dbReference type="SAM" id="MobiDB-lite"/>
    </source>
</evidence>
<evidence type="ECO:0000305" key="3"/>
<dbReference type="EMBL" id="AM421808">
    <property type="protein sequence ID" value="CAM10960.1"/>
    <property type="molecule type" value="Genomic_DNA"/>
</dbReference>
<dbReference type="RefSeq" id="WP_011798990.1">
    <property type="nucleotide sequence ID" value="NC_008767.1"/>
</dbReference>
<dbReference type="KEGG" id="nmc:NMC1789"/>
<dbReference type="HOGENOM" id="CLU_985210_0_0_4"/>
<dbReference type="Proteomes" id="UP000002286">
    <property type="component" value="Chromosome"/>
</dbReference>
<dbReference type="GO" id="GO:0009279">
    <property type="term" value="C:cell outer membrane"/>
    <property type="evidence" value="ECO:0007669"/>
    <property type="project" value="UniProtKB-SubCell"/>
</dbReference>
<dbReference type="GO" id="GO:0007155">
    <property type="term" value="P:cell adhesion"/>
    <property type="evidence" value="ECO:0007669"/>
    <property type="project" value="UniProtKB-KW"/>
</dbReference>
<dbReference type="PROSITE" id="PS51257">
    <property type="entry name" value="PROKAR_LIPOPROTEIN"/>
    <property type="match status" value="1"/>
</dbReference>
<proteinExistence type="inferred from homology"/>
<comment type="subcellular location">
    <subcellularLocation>
        <location evidence="3">Cell outer membrane</location>
        <topology evidence="1">Lipid-anchor</topology>
    </subcellularLocation>
</comment>
<comment type="similarity">
    <text evidence="3">Belongs to the MafA family.</text>
</comment>
<accession>A1KVQ6</accession>
<sequence>MKTLLLLIPLVLTACGTLTGIPAHGGGKRFAVEQELVAASSRAAVKEMDLSALKGRKAALYVSVMGDQGSGNISGGRYSIDALIRGGYHNNPESATQYSYPAYDTTATTKADALSSVTTSTSLLNAPAAALTRNSGRKGERSAGLSVNGTGDYRNETLLANPRDVSFLTNLIQTVFYLRGIEVVPPEYADTDVFVTVDVFGTVRSRTELHLYNAETLKAQTKLEYFAVDRDSRKLLIAPETAAYESQYQEQYALWMGPYSVGKTVKASDRLMVDFSDITPYGDTTAQNRPDFKQNNGKKPDVGNEVIRRRKGG</sequence>
<reference key="1">
    <citation type="journal article" date="2007" name="PLoS Genet.">
        <title>Meningococcal genetic variation mechanisms viewed through comparative analysis of serogroup C strain FAM18.</title>
        <authorList>
            <person name="Bentley S.D."/>
            <person name="Vernikos G.S."/>
            <person name="Snyder L.A.S."/>
            <person name="Churcher C."/>
            <person name="Arrowsmith C."/>
            <person name="Chillingworth T."/>
            <person name="Cronin A."/>
            <person name="Davis P.H."/>
            <person name="Holroyd N.E."/>
            <person name="Jagels K."/>
            <person name="Maddison M."/>
            <person name="Moule S."/>
            <person name="Rabbinowitsch E."/>
            <person name="Sharp S."/>
            <person name="Unwin L."/>
            <person name="Whitehead S."/>
            <person name="Quail M.A."/>
            <person name="Achtman M."/>
            <person name="Barrell B.G."/>
            <person name="Saunders N.J."/>
            <person name="Parkhill J."/>
        </authorList>
    </citation>
    <scope>NUCLEOTIDE SEQUENCE [LARGE SCALE GENOMIC DNA]</scope>
    <source>
        <strain>ATCC 700532 / DSM 15464 / FAM18</strain>
    </source>
</reference>
<gene>
    <name type="primary">mafA2</name>
    <name type="ordered locus">NMC1789</name>
</gene>
<feature type="signal peptide" evidence="1">
    <location>
        <begin position="1"/>
        <end position="14"/>
    </location>
</feature>
<feature type="chain" id="PRO_0000344491" description="Adhesin MafA 2">
    <location>
        <begin position="15"/>
        <end position="313"/>
    </location>
</feature>
<feature type="region of interest" description="Disordered" evidence="2">
    <location>
        <begin position="282"/>
        <end position="313"/>
    </location>
</feature>
<feature type="compositionally biased region" description="Polar residues" evidence="2">
    <location>
        <begin position="282"/>
        <end position="297"/>
    </location>
</feature>
<feature type="lipid moiety-binding region" description="N-palmitoyl cysteine" evidence="1">
    <location>
        <position position="15"/>
    </location>
</feature>
<feature type="lipid moiety-binding region" description="S-diacylglycerol cysteine" evidence="1">
    <location>
        <position position="15"/>
    </location>
</feature>
<name>MAFA2_NEIMF</name>
<organism>
    <name type="scientific">Neisseria meningitidis serogroup C / serotype 2a (strain ATCC 700532 / DSM 15464 / FAM18)</name>
    <dbReference type="NCBI Taxonomy" id="272831"/>
    <lineage>
        <taxon>Bacteria</taxon>
        <taxon>Pseudomonadati</taxon>
        <taxon>Pseudomonadota</taxon>
        <taxon>Betaproteobacteria</taxon>
        <taxon>Neisseriales</taxon>
        <taxon>Neisseriaceae</taxon>
        <taxon>Neisseria</taxon>
    </lineage>
</organism>